<geneLocation type="mitochondrion"/>
<organism>
    <name type="scientific">Pteropus dasymallus</name>
    <name type="common">Ryukyu flying fox</name>
    <dbReference type="NCBI Taxonomy" id="126282"/>
    <lineage>
        <taxon>Eukaryota</taxon>
        <taxon>Metazoa</taxon>
        <taxon>Chordata</taxon>
        <taxon>Craniata</taxon>
        <taxon>Vertebrata</taxon>
        <taxon>Euteleostomi</taxon>
        <taxon>Mammalia</taxon>
        <taxon>Eutheria</taxon>
        <taxon>Laurasiatheria</taxon>
        <taxon>Chiroptera</taxon>
        <taxon>Yinpterochiroptera</taxon>
        <taxon>Pteropodoidea</taxon>
        <taxon>Pteropodidae</taxon>
        <taxon>Pteropodinae</taxon>
        <taxon>Pteropus</taxon>
    </lineage>
</organism>
<sequence length="175" mass="18900">MMTYFVFILSTVFVIGFVGFSSKPSPVYGGVGLIISGGVGCGIVMNFSGSFLGLMVFLIYLGGMMVVFGYTAAMAMELYPEVWISNKVVLGAFVSGLFMEMLLVLYVLKEGSVGSMFEFSSLGDWVVYDVEDSGFFSKEVVGISSLYSYGVWLVVVTGWSLFIAVVVIMEVTRGG</sequence>
<accession>Q9G6M4</accession>
<evidence type="ECO:0000250" key="1">
    <source>
        <dbReference type="UniProtKB" id="P03923"/>
    </source>
</evidence>
<evidence type="ECO:0000250" key="2">
    <source>
        <dbReference type="UniProtKB" id="P03924"/>
    </source>
</evidence>
<evidence type="ECO:0000255" key="3"/>
<evidence type="ECO:0000305" key="4"/>
<reference key="1">
    <citation type="journal article" date="2000" name="J. Mol. Evol.">
        <title>Monophyletic origin of the order chiroptera and its phylogenetic position among mammalia, as inferred from the complete sequence of the mitochondrial DNA of a Japanese megabat, the Ryukyu flying fox (Pteropus dasymallus).</title>
        <authorList>
            <person name="Nikaido M."/>
            <person name="Harada M."/>
            <person name="Cao Y."/>
            <person name="Hasegawa M."/>
            <person name="Okada N."/>
        </authorList>
    </citation>
    <scope>NUCLEOTIDE SEQUENCE [GENOMIC DNA]</scope>
</reference>
<proteinExistence type="inferred from homology"/>
<protein>
    <recommendedName>
        <fullName>NADH-ubiquinone oxidoreductase chain 6</fullName>
        <ecNumber evidence="1">7.1.1.2</ecNumber>
    </recommendedName>
    <alternativeName>
        <fullName>NADH dehydrogenase subunit 6</fullName>
    </alternativeName>
</protein>
<feature type="chain" id="PRO_0000118322" description="NADH-ubiquinone oxidoreductase chain 6">
    <location>
        <begin position="1"/>
        <end position="175"/>
    </location>
</feature>
<feature type="transmembrane region" description="Helical" evidence="3">
    <location>
        <begin position="1"/>
        <end position="21"/>
    </location>
</feature>
<feature type="transmembrane region" description="Helical" evidence="3">
    <location>
        <begin position="27"/>
        <end position="47"/>
    </location>
</feature>
<feature type="transmembrane region" description="Helical" evidence="3">
    <location>
        <begin position="49"/>
        <end position="69"/>
    </location>
</feature>
<feature type="transmembrane region" description="Helical" evidence="3">
    <location>
        <begin position="88"/>
        <end position="108"/>
    </location>
</feature>
<feature type="transmembrane region" description="Helical" evidence="3">
    <location>
        <begin position="149"/>
        <end position="169"/>
    </location>
</feature>
<gene>
    <name type="primary">MT-ND6</name>
    <name type="synonym">MTND6</name>
    <name type="synonym">NADH6</name>
    <name type="synonym">ND6</name>
</gene>
<keyword id="KW-0249">Electron transport</keyword>
<keyword id="KW-0472">Membrane</keyword>
<keyword id="KW-0496">Mitochondrion</keyword>
<keyword id="KW-0999">Mitochondrion inner membrane</keyword>
<keyword id="KW-0520">NAD</keyword>
<keyword id="KW-0679">Respiratory chain</keyword>
<keyword id="KW-1278">Translocase</keyword>
<keyword id="KW-0812">Transmembrane</keyword>
<keyword id="KW-1133">Transmembrane helix</keyword>
<keyword id="KW-0813">Transport</keyword>
<dbReference type="EC" id="7.1.1.2" evidence="1"/>
<dbReference type="EMBL" id="AB042770">
    <property type="protein sequence ID" value="BAB18183.1"/>
    <property type="molecule type" value="Genomic_DNA"/>
</dbReference>
<dbReference type="RefSeq" id="NP_068793.1">
    <property type="nucleotide sequence ID" value="NC_002612.1"/>
</dbReference>
<dbReference type="SMR" id="Q9G6M4"/>
<dbReference type="GeneID" id="800094"/>
<dbReference type="CTD" id="4541"/>
<dbReference type="GO" id="GO:0005743">
    <property type="term" value="C:mitochondrial inner membrane"/>
    <property type="evidence" value="ECO:0000250"/>
    <property type="project" value="UniProtKB"/>
</dbReference>
<dbReference type="GO" id="GO:0008137">
    <property type="term" value="F:NADH dehydrogenase (ubiquinone) activity"/>
    <property type="evidence" value="ECO:0000250"/>
    <property type="project" value="UniProtKB"/>
</dbReference>
<dbReference type="GO" id="GO:0006120">
    <property type="term" value="P:mitochondrial electron transport, NADH to ubiquinone"/>
    <property type="evidence" value="ECO:0000250"/>
    <property type="project" value="UniProtKB"/>
</dbReference>
<dbReference type="GO" id="GO:0032981">
    <property type="term" value="P:mitochondrial respiratory chain complex I assembly"/>
    <property type="evidence" value="ECO:0000250"/>
    <property type="project" value="UniProtKB"/>
</dbReference>
<dbReference type="InterPro" id="IPR050269">
    <property type="entry name" value="ComplexI_Subunit6"/>
</dbReference>
<dbReference type="InterPro" id="IPR001457">
    <property type="entry name" value="NADH_UbQ/plastoQ_OxRdtase_su6"/>
</dbReference>
<dbReference type="PANTHER" id="PTHR11435">
    <property type="entry name" value="NADH UBIQUINONE OXIDOREDUCTASE SUBUNIT ND6"/>
    <property type="match status" value="1"/>
</dbReference>
<dbReference type="PANTHER" id="PTHR11435:SF1">
    <property type="entry name" value="NADH-UBIQUINONE OXIDOREDUCTASE CHAIN 6"/>
    <property type="match status" value="1"/>
</dbReference>
<dbReference type="Pfam" id="PF00499">
    <property type="entry name" value="Oxidored_q3"/>
    <property type="match status" value="1"/>
</dbReference>
<name>NU6M_PTEDA</name>
<comment type="function">
    <text evidence="1">Core subunit of the mitochondrial membrane respiratory chain NADH dehydrogenase (Complex I) which catalyzes electron transfer from NADH through the respiratory chain, using ubiquinone as an electron acceptor. Essential for the catalytic activity and assembly of complex I.</text>
</comment>
<comment type="catalytic activity">
    <reaction evidence="1">
        <text>a ubiquinone + NADH + 5 H(+)(in) = a ubiquinol + NAD(+) + 4 H(+)(out)</text>
        <dbReference type="Rhea" id="RHEA:29091"/>
        <dbReference type="Rhea" id="RHEA-COMP:9565"/>
        <dbReference type="Rhea" id="RHEA-COMP:9566"/>
        <dbReference type="ChEBI" id="CHEBI:15378"/>
        <dbReference type="ChEBI" id="CHEBI:16389"/>
        <dbReference type="ChEBI" id="CHEBI:17976"/>
        <dbReference type="ChEBI" id="CHEBI:57540"/>
        <dbReference type="ChEBI" id="CHEBI:57945"/>
        <dbReference type="EC" id="7.1.1.2"/>
    </reaction>
</comment>
<comment type="subunit">
    <text evidence="2">Core subunit of respiratory chain NADH dehydrogenase (Complex I) which is composed of 45 different subunits.</text>
</comment>
<comment type="subcellular location">
    <subcellularLocation>
        <location evidence="2">Mitochondrion inner membrane</location>
        <topology evidence="3">Multi-pass membrane protein</topology>
    </subcellularLocation>
</comment>
<comment type="similarity">
    <text evidence="4">Belongs to the complex I subunit 6 family.</text>
</comment>